<name>CRYAB_ANAPL</name>
<dbReference type="EMBL" id="L08078">
    <property type="protein sequence ID" value="AAA02969.1"/>
    <property type="molecule type" value="mRNA"/>
</dbReference>
<dbReference type="EMBL" id="U16124">
    <property type="protein sequence ID" value="AAA86978.1"/>
    <property type="molecule type" value="Genomic_DNA"/>
</dbReference>
<dbReference type="PIR" id="S58758">
    <property type="entry name" value="S58758"/>
</dbReference>
<dbReference type="RefSeq" id="NP_001297295.1">
    <property type="nucleotide sequence ID" value="NM_001310366.1"/>
</dbReference>
<dbReference type="SMR" id="Q05557"/>
<dbReference type="Ensembl" id="ENSAPLT00020004083.1">
    <property type="protein sequence ID" value="ENSAPLP00020003794.1"/>
    <property type="gene ID" value="ENSAPLG00020002808.1"/>
</dbReference>
<dbReference type="GeneID" id="101800794"/>
<dbReference type="KEGG" id="apla:101800794"/>
<dbReference type="CTD" id="1410"/>
<dbReference type="HOGENOM" id="CLU_095001_2_0_1"/>
<dbReference type="OMA" id="FRDWWED"/>
<dbReference type="OrthoDB" id="1431247at2759"/>
<dbReference type="Proteomes" id="UP000694400">
    <property type="component" value="Chromosome 23"/>
</dbReference>
<dbReference type="GO" id="GO:0005737">
    <property type="term" value="C:cytoplasm"/>
    <property type="evidence" value="ECO:0007669"/>
    <property type="project" value="TreeGrafter"/>
</dbReference>
<dbReference type="GO" id="GO:0005634">
    <property type="term" value="C:nucleus"/>
    <property type="evidence" value="ECO:0007669"/>
    <property type="project" value="TreeGrafter"/>
</dbReference>
<dbReference type="GO" id="GO:0046872">
    <property type="term" value="F:metal ion binding"/>
    <property type="evidence" value="ECO:0007669"/>
    <property type="project" value="UniProtKB-KW"/>
</dbReference>
<dbReference type="GO" id="GO:0042803">
    <property type="term" value="F:protein homodimerization activity"/>
    <property type="evidence" value="ECO:0000250"/>
    <property type="project" value="UniProtKB"/>
</dbReference>
<dbReference type="GO" id="GO:0005212">
    <property type="term" value="F:structural constituent of eye lens"/>
    <property type="evidence" value="ECO:0007669"/>
    <property type="project" value="UniProtKB-KW"/>
</dbReference>
<dbReference type="GO" id="GO:0051082">
    <property type="term" value="F:unfolded protein binding"/>
    <property type="evidence" value="ECO:0007669"/>
    <property type="project" value="TreeGrafter"/>
</dbReference>
<dbReference type="GO" id="GO:0043066">
    <property type="term" value="P:negative regulation of apoptotic process"/>
    <property type="evidence" value="ECO:0007669"/>
    <property type="project" value="TreeGrafter"/>
</dbReference>
<dbReference type="GO" id="GO:0042026">
    <property type="term" value="P:protein refolding"/>
    <property type="evidence" value="ECO:0007669"/>
    <property type="project" value="TreeGrafter"/>
</dbReference>
<dbReference type="GO" id="GO:0009408">
    <property type="term" value="P:response to heat"/>
    <property type="evidence" value="ECO:0007669"/>
    <property type="project" value="TreeGrafter"/>
</dbReference>
<dbReference type="FunFam" id="2.60.40.790:FF:000011">
    <property type="entry name" value="Alpha-crystallin B chain"/>
    <property type="match status" value="1"/>
</dbReference>
<dbReference type="Gene3D" id="2.60.40.790">
    <property type="match status" value="1"/>
</dbReference>
<dbReference type="InterPro" id="IPR002068">
    <property type="entry name" value="A-crystallin/Hsp20_dom"/>
</dbReference>
<dbReference type="InterPro" id="IPR055269">
    <property type="entry name" value="Alpha-crystallin/HSP_16"/>
</dbReference>
<dbReference type="InterPro" id="IPR001436">
    <property type="entry name" value="Alpha-crystallin/sHSP_animal"/>
</dbReference>
<dbReference type="InterPro" id="IPR003090">
    <property type="entry name" value="Alpha-crystallin_N"/>
</dbReference>
<dbReference type="InterPro" id="IPR008978">
    <property type="entry name" value="HSP20-like_chaperone"/>
</dbReference>
<dbReference type="PANTHER" id="PTHR45640:SF5">
    <property type="entry name" value="ALPHA-CRYSTALLIN B CHAIN"/>
    <property type="match status" value="1"/>
</dbReference>
<dbReference type="PANTHER" id="PTHR45640">
    <property type="entry name" value="HEAT SHOCK PROTEIN HSP-12.2-RELATED"/>
    <property type="match status" value="1"/>
</dbReference>
<dbReference type="Pfam" id="PF00525">
    <property type="entry name" value="Crystallin"/>
    <property type="match status" value="1"/>
</dbReference>
<dbReference type="Pfam" id="PF00011">
    <property type="entry name" value="HSP20"/>
    <property type="match status" value="1"/>
</dbReference>
<dbReference type="PIRSF" id="PIRSF036514">
    <property type="entry name" value="Sm_HSP_B1"/>
    <property type="match status" value="1"/>
</dbReference>
<dbReference type="PRINTS" id="PR00299">
    <property type="entry name" value="ACRYSTALLIN"/>
</dbReference>
<dbReference type="SUPFAM" id="SSF49764">
    <property type="entry name" value="HSP20-like chaperones"/>
    <property type="match status" value="1"/>
</dbReference>
<dbReference type="PROSITE" id="PS01031">
    <property type="entry name" value="SHSP"/>
    <property type="match status" value="1"/>
</dbReference>
<proteinExistence type="evidence at transcript level"/>
<protein>
    <recommendedName>
        <fullName>Alpha-crystallin B chain</fullName>
    </recommendedName>
    <alternativeName>
        <fullName>Alpha(B)-crystallin</fullName>
    </alternativeName>
</protein>
<gene>
    <name type="primary">CRYAB</name>
</gene>
<accession>Q05557</accession>
<organism>
    <name type="scientific">Anas platyrhynchos</name>
    <name type="common">Mallard</name>
    <name type="synonym">Anas boschas</name>
    <dbReference type="NCBI Taxonomy" id="8839"/>
    <lineage>
        <taxon>Eukaryota</taxon>
        <taxon>Metazoa</taxon>
        <taxon>Chordata</taxon>
        <taxon>Craniata</taxon>
        <taxon>Vertebrata</taxon>
        <taxon>Euteleostomi</taxon>
        <taxon>Archelosauria</taxon>
        <taxon>Archosauria</taxon>
        <taxon>Dinosauria</taxon>
        <taxon>Saurischia</taxon>
        <taxon>Theropoda</taxon>
        <taxon>Coelurosauria</taxon>
        <taxon>Aves</taxon>
        <taxon>Neognathae</taxon>
        <taxon>Galloanserae</taxon>
        <taxon>Anseriformes</taxon>
        <taxon>Anatidae</taxon>
        <taxon>Anatinae</taxon>
        <taxon>Anas</taxon>
    </lineage>
</organism>
<evidence type="ECO:0000250" key="1"/>
<evidence type="ECO:0000255" key="2">
    <source>
        <dbReference type="PROSITE-ProRule" id="PRU00285"/>
    </source>
</evidence>
<evidence type="ECO:0000256" key="3">
    <source>
        <dbReference type="SAM" id="MobiDB-lite"/>
    </source>
</evidence>
<reference key="1">
    <citation type="journal article" date="1993" name="J. Mol. Biol.">
        <title>An avian alpha B-crystallin. Non-lens expression and sequence similarities with both small (HSP27) and large (HSP70) heat shock proteins.</title>
        <authorList>
            <person name="Lee D.C."/>
            <person name="Kim R.Y."/>
            <person name="Wistow G.J."/>
        </authorList>
    </citation>
    <scope>NUCLEOTIDE SEQUENCE [MRNA]</scope>
    <source>
        <tissue>Lens</tissue>
    </source>
</reference>
<reference key="2">
    <citation type="journal article" date="1995" name="Biochim. Biophys. Acta">
        <title>The duck gene for alpha B-crystallin shows evolutionary conservation of discrete promoter elements but lacks heat and osmotic shock response.</title>
        <authorList>
            <person name="Wistow G."/>
            <person name="Graham C."/>
        </authorList>
    </citation>
    <scope>NUCLEOTIDE SEQUENCE [GENOMIC DNA]</scope>
</reference>
<sequence>MDITIHNPLIRRPLFSWLAPSRIFDQIFGEHLQESELLPASPSLSPFLMRSPIFRMPSWLETGLSEMRLEKDKFSVNLDVKHFSPEELKVKVLGDMVEIHGKHEERQDEHGFIAREFNRKYRIPADVDPLTITSSLSLDGVLTVSAPRKQSDVPERSIPITREEKPAIAGAQRK</sequence>
<comment type="function">
    <text>May contribute to the transparency and refractive index of the lens.</text>
</comment>
<comment type="subunit">
    <text evidence="1">Heteromer composed of three CRYAA and one CRYAB subunits. Aggregates with homologous proteins, including the small heat shock protein HSPB1, to form large heteromeric complexes. Inter-subunit bridging via zinc ions enhances stability, which is crucial as there is no protein turn over in the lens (By similarity).</text>
</comment>
<comment type="tissue specificity">
    <text>Lens as well as other tissues.</text>
</comment>
<comment type="similarity">
    <text evidence="2">Belongs to the small heat shock protein (HSP20) family.</text>
</comment>
<feature type="chain" id="PRO_0000125916" description="Alpha-crystallin B chain">
    <location>
        <begin position="1"/>
        <end position="174"/>
    </location>
</feature>
<feature type="domain" description="sHSP" evidence="2">
    <location>
        <begin position="55"/>
        <end position="163"/>
    </location>
</feature>
<feature type="region of interest" description="Disordered" evidence="3">
    <location>
        <begin position="148"/>
        <end position="174"/>
    </location>
</feature>
<feature type="compositionally biased region" description="Basic and acidic residues" evidence="3">
    <location>
        <begin position="149"/>
        <end position="166"/>
    </location>
</feature>
<feature type="binding site" evidence="1">
    <location>
        <position position="82"/>
    </location>
    <ligand>
        <name>Zn(2+)</name>
        <dbReference type="ChEBI" id="CHEBI:29105"/>
        <label>1</label>
    </ligand>
</feature>
<feature type="binding site" evidence="1">
    <location>
        <position position="103"/>
    </location>
    <ligand>
        <name>Zn(2+)</name>
        <dbReference type="ChEBI" id="CHEBI:29105"/>
        <label>2</label>
    </ligand>
</feature>
<feature type="binding site" evidence="1">
    <location>
        <position position="105"/>
    </location>
    <ligand>
        <name>Zn(2+)</name>
        <dbReference type="ChEBI" id="CHEBI:29105"/>
        <label>2</label>
    </ligand>
</feature>
<feature type="binding site" evidence="1">
    <location>
        <position position="110"/>
    </location>
    <ligand>
        <name>Zn(2+)</name>
        <dbReference type="ChEBI" id="CHEBI:29105"/>
        <label>1</label>
    </ligand>
</feature>
<feature type="modified residue" description="N-acetylmethionine" evidence="1">
    <location>
        <position position="1"/>
    </location>
</feature>
<keyword id="KW-0007">Acetylation</keyword>
<keyword id="KW-0273">Eye lens protein</keyword>
<keyword id="KW-0479">Metal-binding</keyword>
<keyword id="KW-0862">Zinc</keyword>